<accession>Q8S9M1</accession>
<accession>O48521</accession>
<accession>Q84X37</accession>
<accession>Q84X38</accession>
<accession>Q84X39</accession>
<accession>Q8GY49</accession>
<comment type="subcellular location">
    <subcellularLocation>
        <location evidence="2 3">Plastid</location>
        <location evidence="2 3">Chloroplast</location>
        <location evidence="2 3">Plastoglobule</location>
    </subcellularLocation>
</comment>
<comment type="alternative products">
    <event type="alternative splicing"/>
    <isoform>
        <id>Q8S9M1-1</id>
        <name>1</name>
        <sequence type="displayed"/>
    </isoform>
    <isoform>
        <id>Q8S9M1-2</id>
        <name>2</name>
        <sequence type="described" ref="VSP_025078 VSP_025079"/>
    </isoform>
    <isoform>
        <id>Q8S9M1-3</id>
        <name>3</name>
        <sequence type="described" ref="VSP_025074"/>
    </isoform>
    <isoform>
        <id>Q8S9M1-4</id>
        <name>4</name>
        <sequence type="described" ref="VSP_025074 VSP_025075"/>
    </isoform>
    <isoform>
        <id>Q8S9M1-5</id>
        <name>5</name>
        <sequence type="described" ref="VSP_025074 VSP_025076 VSP_025077"/>
    </isoform>
    <isoform>
        <id>Q8S9M1-6</id>
        <name>6</name>
        <sequence type="described" ref="VSP_025073"/>
    </isoform>
</comment>
<comment type="similarity">
    <text evidence="8">Belongs to the PAP/fibrillin family.</text>
</comment>
<reference key="1">
    <citation type="journal article" date="1999" name="Nature">
        <title>Sequence and analysis of chromosome 2 of the plant Arabidopsis thaliana.</title>
        <authorList>
            <person name="Lin X."/>
            <person name="Kaul S."/>
            <person name="Rounsley S.D."/>
            <person name="Shea T.P."/>
            <person name="Benito M.-I."/>
            <person name="Town C.D."/>
            <person name="Fujii C.Y."/>
            <person name="Mason T.M."/>
            <person name="Bowman C.L."/>
            <person name="Barnstead M.E."/>
            <person name="Feldblyum T.V."/>
            <person name="Buell C.R."/>
            <person name="Ketchum K.A."/>
            <person name="Lee J.J."/>
            <person name="Ronning C.M."/>
            <person name="Koo H.L."/>
            <person name="Moffat K.S."/>
            <person name="Cronin L.A."/>
            <person name="Shen M."/>
            <person name="Pai G."/>
            <person name="Van Aken S."/>
            <person name="Umayam L."/>
            <person name="Tallon L.J."/>
            <person name="Gill J.E."/>
            <person name="Adams M.D."/>
            <person name="Carrera A.J."/>
            <person name="Creasy T.H."/>
            <person name="Goodman H.M."/>
            <person name="Somerville C.R."/>
            <person name="Copenhaver G.P."/>
            <person name="Preuss D."/>
            <person name="Nierman W.C."/>
            <person name="White O."/>
            <person name="Eisen J.A."/>
            <person name="Salzberg S.L."/>
            <person name="Fraser C.M."/>
            <person name="Venter J.C."/>
        </authorList>
    </citation>
    <scope>NUCLEOTIDE SEQUENCE [LARGE SCALE GENOMIC DNA]</scope>
    <source>
        <strain>cv. Columbia</strain>
    </source>
</reference>
<reference key="2">
    <citation type="journal article" date="2017" name="Plant J.">
        <title>Araport11: a complete reannotation of the Arabidopsis thaliana reference genome.</title>
        <authorList>
            <person name="Cheng C.Y."/>
            <person name="Krishnakumar V."/>
            <person name="Chan A.P."/>
            <person name="Thibaud-Nissen F."/>
            <person name="Schobel S."/>
            <person name="Town C.D."/>
        </authorList>
    </citation>
    <scope>GENOME REANNOTATION</scope>
    <source>
        <strain>cv. Columbia</strain>
    </source>
</reference>
<reference key="3">
    <citation type="journal article" date="2002" name="Science">
        <title>Functional annotation of a full-length Arabidopsis cDNA collection.</title>
        <authorList>
            <person name="Seki M."/>
            <person name="Narusaka M."/>
            <person name="Kamiya A."/>
            <person name="Ishida J."/>
            <person name="Satou M."/>
            <person name="Sakurai T."/>
            <person name="Nakajima M."/>
            <person name="Enju A."/>
            <person name="Akiyama K."/>
            <person name="Oono Y."/>
            <person name="Muramatsu M."/>
            <person name="Hayashizaki Y."/>
            <person name="Kawai J."/>
            <person name="Carninci P."/>
            <person name="Itoh M."/>
            <person name="Ishii Y."/>
            <person name="Arakawa T."/>
            <person name="Shibata K."/>
            <person name="Shinagawa A."/>
            <person name="Shinozaki K."/>
        </authorList>
    </citation>
    <scope>NUCLEOTIDE SEQUENCE [LARGE SCALE MRNA] (ISOFORM 6)</scope>
    <source>
        <strain>cv. Columbia</strain>
    </source>
</reference>
<reference key="4">
    <citation type="journal article" date="2003" name="Science">
        <title>Empirical analysis of transcriptional activity in the Arabidopsis genome.</title>
        <authorList>
            <person name="Yamada K."/>
            <person name="Lim J."/>
            <person name="Dale J.M."/>
            <person name="Chen H."/>
            <person name="Shinn P."/>
            <person name="Palm C.J."/>
            <person name="Southwick A.M."/>
            <person name="Wu H.C."/>
            <person name="Kim C.J."/>
            <person name="Nguyen M."/>
            <person name="Pham P.K."/>
            <person name="Cheuk R.F."/>
            <person name="Karlin-Newmann G."/>
            <person name="Liu S.X."/>
            <person name="Lam B."/>
            <person name="Sakano H."/>
            <person name="Wu T."/>
            <person name="Yu G."/>
            <person name="Miranda M."/>
            <person name="Quach H.L."/>
            <person name="Tripp M."/>
            <person name="Chang C.H."/>
            <person name="Lee J.M."/>
            <person name="Toriumi M.J."/>
            <person name="Chan M.M."/>
            <person name="Tang C.C."/>
            <person name="Onodera C.S."/>
            <person name="Deng J.M."/>
            <person name="Akiyama K."/>
            <person name="Ansari Y."/>
            <person name="Arakawa T."/>
            <person name="Banh J."/>
            <person name="Banno F."/>
            <person name="Bowser L."/>
            <person name="Brooks S.Y."/>
            <person name="Carninci P."/>
            <person name="Chao Q."/>
            <person name="Choy N."/>
            <person name="Enju A."/>
            <person name="Goldsmith A.D."/>
            <person name="Gurjal M."/>
            <person name="Hansen N.F."/>
            <person name="Hayashizaki Y."/>
            <person name="Johnson-Hopson C."/>
            <person name="Hsuan V.W."/>
            <person name="Iida K."/>
            <person name="Karnes M."/>
            <person name="Khan S."/>
            <person name="Koesema E."/>
            <person name="Ishida J."/>
            <person name="Jiang P.X."/>
            <person name="Jones T."/>
            <person name="Kawai J."/>
            <person name="Kamiya A."/>
            <person name="Meyers C."/>
            <person name="Nakajima M."/>
            <person name="Narusaka M."/>
            <person name="Seki M."/>
            <person name="Sakurai T."/>
            <person name="Satou M."/>
            <person name="Tamse R."/>
            <person name="Vaysberg M."/>
            <person name="Wallender E.K."/>
            <person name="Wong C."/>
            <person name="Yamamura Y."/>
            <person name="Yuan S."/>
            <person name="Shinozaki K."/>
            <person name="Davis R.W."/>
            <person name="Theologis A."/>
            <person name="Ecker J.R."/>
        </authorList>
    </citation>
    <scope>NUCLEOTIDE SEQUENCE [LARGE SCALE MRNA] (ISOFORM 2)</scope>
    <source>
        <strain>cv. Columbia</strain>
    </source>
</reference>
<reference key="5">
    <citation type="journal article" date="2005" name="Plant Physiol.">
        <title>Analysis of the cDNAs of hypothetical genes on Arabidopsis chromosome 2 reveals numerous transcript variants.</title>
        <authorList>
            <person name="Xiao Y.-L."/>
            <person name="Smith S.R."/>
            <person name="Ishmael N."/>
            <person name="Redman J.C."/>
            <person name="Kumar N."/>
            <person name="Monaghan E.L."/>
            <person name="Ayele M."/>
            <person name="Haas B.J."/>
            <person name="Wu H.C."/>
            <person name="Town C.D."/>
        </authorList>
    </citation>
    <scope>NUCLEOTIDE SEQUENCE [LARGE SCALE MRNA] (ISOFORMS 3; 4 AND 5)</scope>
    <source>
        <strain>cv. Columbia</strain>
    </source>
</reference>
<reference key="6">
    <citation type="submission" date="2005-03" db="EMBL/GenBank/DDBJ databases">
        <authorList>
            <person name="Underwood B.A."/>
            <person name="Xiao Y.-L."/>
            <person name="Moskal W.A. Jr."/>
            <person name="Monaghan E.L."/>
            <person name="Wang W."/>
            <person name="Redman J.C."/>
            <person name="Wu H.C."/>
            <person name="Utterback T."/>
            <person name="Town C.D."/>
        </authorList>
    </citation>
    <scope>NUCLEOTIDE SEQUENCE [LARGE SCALE MRNA] (ISOFORM 3)</scope>
    <source>
        <strain>cv. Columbia</strain>
    </source>
</reference>
<reference key="7">
    <citation type="journal article" date="2006" name="Plant Physiol.">
        <title>Protein profiling of plastoglobules in chloroplasts and chromoplasts. A surprising site for differential accumulation of metabolic enzymes.</title>
        <authorList>
            <person name="Ytterberg A.J."/>
            <person name="Peltier J.-B."/>
            <person name="van Wijk K.J."/>
        </authorList>
    </citation>
    <scope>IDENTIFICATION BY MASS SPECTROMETRY</scope>
    <scope>SUBCELLULAR LOCATION [LARGE SCALE ANALYSIS]</scope>
    <source>
        <strain>cv. Columbia</strain>
    </source>
</reference>
<reference key="8">
    <citation type="journal article" date="2011" name="Trends Plant Sci.">
        <title>Fibrillin protein function: the tip of the iceberg?</title>
        <authorList>
            <person name="Singh D.K."/>
            <person name="McNellis T.W."/>
        </authorList>
    </citation>
    <scope>GENE FAMILY</scope>
    <scope>NOMENCLATURE</scope>
</reference>
<reference key="9">
    <citation type="journal article" date="2012" name="Mol. Cell. Proteomics">
        <title>Comparative large-scale characterisation of plant vs. mammal proteins reveals similar and idiosyncratic N-alpha acetylation features.</title>
        <authorList>
            <person name="Bienvenut W.V."/>
            <person name="Sumpton D."/>
            <person name="Martinez A."/>
            <person name="Lilla S."/>
            <person name="Espagne C."/>
            <person name="Meinnel T."/>
            <person name="Giglione C."/>
        </authorList>
    </citation>
    <scope>ACETYLATION [LARGE SCALE ANALYSIS] AT VAL-2 (ISOFORMS 3; 4 AND 5)</scope>
    <scope>CLEAVAGE OF INITIATOR METHIONINE [LARGE SCALE ANALYSIS] (ISOFORM 3)</scope>
    <scope>CLEAVAGE OF INITIATOR METHIONINE [LARGE SCALE ANALYSIS] (ISOFORM 4)</scope>
    <scope>CLEAVAGE OF INITIATOR METHIONINE [LARGE SCALE ANALYSIS] (ISOFORM 5)</scope>
    <scope>IDENTIFICATION BY MASS SPECTROMETRY [LARGE SCALE ANALYSIS]</scope>
</reference>
<reference key="10">
    <citation type="journal article" date="2012" name="Plant Physiol.">
        <title>The functional network of the Arabidopsis plastoglobule proteome based on quantitative proteomics and genome-wide coexpression analysis.</title>
        <authorList>
            <person name="Lundquist P.K."/>
            <person name="Poliakov A."/>
            <person name="Bhuiyan N.H."/>
            <person name="Zybailov B."/>
            <person name="Sun Q."/>
            <person name="van Wijk K.J."/>
        </authorList>
    </citation>
    <scope>IDENTIFICATION BY MASS SPECTROMETRY</scope>
    <scope>SUBCELLULAR LOCATION [LARGE SCALE ANALYSIS]</scope>
    <source>
        <strain>cv. Columbia</strain>
    </source>
</reference>
<feature type="transit peptide" description="Chloroplast" evidence="1">
    <location>
        <begin position="1"/>
        <end position="48"/>
    </location>
</feature>
<feature type="chain" id="PRO_0000286536" description="Probable plastid-lipid-associated protein 13, chloroplastic">
    <location>
        <begin position="49"/>
        <end position="299"/>
    </location>
</feature>
<feature type="splice variant" id="VSP_025073" description="In isoform 6." evidence="4">
    <location>
        <begin position="1"/>
        <end position="158"/>
    </location>
</feature>
<feature type="splice variant" id="VSP_025074" description="In isoform 3, isoform 4 and isoform 5." evidence="6 7">
    <location>
        <begin position="1"/>
        <end position="49"/>
    </location>
</feature>
<feature type="splice variant" id="VSP_025075" description="In isoform 4." evidence="6">
    <original>A</original>
    <variation>AEQSSVCLELSNYFCPEAIYVQ</variation>
    <location>
        <position position="78"/>
    </location>
</feature>
<feature type="splice variant" id="VSP_025076" description="In isoform 5." evidence="6">
    <original>RFPSTLAN</original>
    <variation>SVLIIFSS</variation>
    <location>
        <begin position="148"/>
        <end position="155"/>
    </location>
</feature>
<feature type="splice variant" id="VSP_025077" description="In isoform 5." evidence="6">
    <location>
        <begin position="156"/>
        <end position="299"/>
    </location>
</feature>
<feature type="splice variant" id="VSP_025078" description="In isoform 2." evidence="5">
    <original>GSFERFFMISYLDEEILI</original>
    <variation>KLLYPFFIHLTIFRSNLH</variation>
    <location>
        <begin position="253"/>
        <end position="270"/>
    </location>
</feature>
<feature type="splice variant" id="VSP_025079" description="In isoform 2." evidence="5">
    <location>
        <begin position="271"/>
        <end position="299"/>
    </location>
</feature>
<feature type="initiator methionine" description="Removed" evidence="9">
    <location sequence="Q8S9M1-3">
        <position position="1"/>
    </location>
</feature>
<feature type="modified residue" description="N-acetylvaline" evidence="9">
    <location sequence="Q8S9M1-3">
        <position position="2"/>
    </location>
</feature>
<feature type="initiator methionine" description="Removed" evidence="9">
    <location sequence="Q8S9M1-4">
        <position position="1"/>
    </location>
</feature>
<feature type="modified residue" description="N-acetylvaline" evidence="9">
    <location sequence="Q8S9M1-4">
        <position position="2"/>
    </location>
</feature>
<feature type="initiator methionine" description="Removed" evidence="9">
    <location sequence="Q8S9M1-5">
        <position position="1"/>
    </location>
</feature>
<feature type="modified residue" description="N-acetylvaline" evidence="9">
    <location sequence="Q8S9M1-5">
        <position position="2"/>
    </location>
</feature>
<dbReference type="EMBL" id="AC002561">
    <property type="protein sequence ID" value="AAB88638.2"/>
    <property type="molecule type" value="Genomic_DNA"/>
</dbReference>
<dbReference type="EMBL" id="CP002685">
    <property type="protein sequence ID" value="AEC10074.1"/>
    <property type="molecule type" value="Genomic_DNA"/>
</dbReference>
<dbReference type="EMBL" id="CP002685">
    <property type="protein sequence ID" value="AEC10075.1"/>
    <property type="molecule type" value="Genomic_DNA"/>
</dbReference>
<dbReference type="EMBL" id="CP002685">
    <property type="protein sequence ID" value="AEC10076.1"/>
    <property type="molecule type" value="Genomic_DNA"/>
</dbReference>
<dbReference type="EMBL" id="AK117864">
    <property type="protein sequence ID" value="BAC42505.1"/>
    <property type="molecule type" value="mRNA"/>
</dbReference>
<dbReference type="EMBL" id="AY074656">
    <property type="protein sequence ID" value="AAL69472.1"/>
    <property type="molecule type" value="mRNA"/>
</dbReference>
<dbReference type="EMBL" id="AY219066">
    <property type="protein sequence ID" value="AAO37153.1"/>
    <property type="molecule type" value="mRNA"/>
</dbReference>
<dbReference type="EMBL" id="AY219067">
    <property type="protein sequence ID" value="AAO37154.1"/>
    <property type="molecule type" value="mRNA"/>
</dbReference>
<dbReference type="EMBL" id="AY219068">
    <property type="protein sequence ID" value="AAO37155.1"/>
    <property type="molecule type" value="mRNA"/>
</dbReference>
<dbReference type="EMBL" id="AY954828">
    <property type="protein sequence ID" value="AAX55154.1"/>
    <property type="molecule type" value="mRNA"/>
</dbReference>
<dbReference type="PIR" id="T00923">
    <property type="entry name" value="T00923"/>
</dbReference>
<dbReference type="RefSeq" id="NP_850362.1">
    <molecule id="Q8S9M1-2"/>
    <property type="nucleotide sequence ID" value="NM_180031.2"/>
</dbReference>
<dbReference type="RefSeq" id="NP_973666.1">
    <molecule id="Q8S9M1-4"/>
    <property type="nucleotide sequence ID" value="NM_201937.1"/>
</dbReference>
<dbReference type="RefSeq" id="NP_973667.2">
    <molecule id="Q8S9M1-1"/>
    <property type="nucleotide sequence ID" value="NM_201938.3"/>
</dbReference>
<dbReference type="FunCoup" id="Q8S9M1">
    <property type="interactions" value="1620"/>
</dbReference>
<dbReference type="STRING" id="3702.Q8S9M1"/>
<dbReference type="iPTMnet" id="Q8S9M1"/>
<dbReference type="PaxDb" id="3702-AT2G42130.4"/>
<dbReference type="EnsemblPlants" id="AT2G42130.1">
    <molecule id="Q8S9M1-2"/>
    <property type="protein sequence ID" value="AT2G42130.1"/>
    <property type="gene ID" value="AT2G42130"/>
</dbReference>
<dbReference type="EnsemblPlants" id="AT2G42130.3">
    <molecule id="Q8S9M1-4"/>
    <property type="protein sequence ID" value="AT2G42130.3"/>
    <property type="gene ID" value="AT2G42130"/>
</dbReference>
<dbReference type="EnsemblPlants" id="AT2G42130.4">
    <molecule id="Q8S9M1-1"/>
    <property type="protein sequence ID" value="AT2G42130.4"/>
    <property type="gene ID" value="AT2G42130"/>
</dbReference>
<dbReference type="GeneID" id="818813"/>
<dbReference type="Gramene" id="AT2G42130.1">
    <molecule id="Q8S9M1-2"/>
    <property type="protein sequence ID" value="AT2G42130.1"/>
    <property type="gene ID" value="AT2G42130"/>
</dbReference>
<dbReference type="Gramene" id="AT2G42130.3">
    <molecule id="Q8S9M1-4"/>
    <property type="protein sequence ID" value="AT2G42130.3"/>
    <property type="gene ID" value="AT2G42130"/>
</dbReference>
<dbReference type="Gramene" id="AT2G42130.4">
    <molecule id="Q8S9M1-1"/>
    <property type="protein sequence ID" value="AT2G42130.4"/>
    <property type="gene ID" value="AT2G42130"/>
</dbReference>
<dbReference type="KEGG" id="ath:AT2G42130"/>
<dbReference type="Araport" id="AT2G42130"/>
<dbReference type="TAIR" id="AT2G42130"/>
<dbReference type="eggNOG" id="ENOG502S160">
    <property type="taxonomic scope" value="Eukaryota"/>
</dbReference>
<dbReference type="InParanoid" id="Q8S9M1"/>
<dbReference type="OMA" id="QRIFMIS"/>
<dbReference type="OrthoDB" id="2015720at2759"/>
<dbReference type="PhylomeDB" id="Q8S9M1"/>
<dbReference type="CD-CODE" id="4299E36E">
    <property type="entry name" value="Nucleolus"/>
</dbReference>
<dbReference type="PRO" id="PR:Q8S9M1"/>
<dbReference type="Proteomes" id="UP000006548">
    <property type="component" value="Chromosome 2"/>
</dbReference>
<dbReference type="ExpressionAtlas" id="Q8S9M1">
    <property type="expression patterns" value="baseline and differential"/>
</dbReference>
<dbReference type="GO" id="GO:0009507">
    <property type="term" value="C:chloroplast"/>
    <property type="evidence" value="ECO:0007005"/>
    <property type="project" value="TAIR"/>
</dbReference>
<dbReference type="GO" id="GO:0009570">
    <property type="term" value="C:chloroplast stroma"/>
    <property type="evidence" value="ECO:0007005"/>
    <property type="project" value="TAIR"/>
</dbReference>
<dbReference type="GO" id="GO:0009534">
    <property type="term" value="C:chloroplast thylakoid"/>
    <property type="evidence" value="ECO:0007005"/>
    <property type="project" value="TAIR"/>
</dbReference>
<dbReference type="GO" id="GO:0005829">
    <property type="term" value="C:cytosol"/>
    <property type="evidence" value="ECO:0007005"/>
    <property type="project" value="TAIR"/>
</dbReference>
<dbReference type="GO" id="GO:0010287">
    <property type="term" value="C:plastoglobule"/>
    <property type="evidence" value="ECO:0007005"/>
    <property type="project" value="TAIR"/>
</dbReference>
<dbReference type="GO" id="GO:0009579">
    <property type="term" value="C:thylakoid"/>
    <property type="evidence" value="ECO:0007005"/>
    <property type="project" value="TAIR"/>
</dbReference>
<dbReference type="InterPro" id="IPR039633">
    <property type="entry name" value="PAP"/>
</dbReference>
<dbReference type="InterPro" id="IPR006843">
    <property type="entry name" value="PAP/fibrillin_dom"/>
</dbReference>
<dbReference type="PANTHER" id="PTHR31906">
    <property type="entry name" value="PLASTID-LIPID-ASSOCIATED PROTEIN 4, CHLOROPLASTIC-RELATED"/>
    <property type="match status" value="1"/>
</dbReference>
<dbReference type="Pfam" id="PF04755">
    <property type="entry name" value="PAP_fibrillin"/>
    <property type="match status" value="1"/>
</dbReference>
<keyword id="KW-0007">Acetylation</keyword>
<keyword id="KW-0025">Alternative splicing</keyword>
<keyword id="KW-0150">Chloroplast</keyword>
<keyword id="KW-0934">Plastid</keyword>
<keyword id="KW-1185">Reference proteome</keyword>
<keyword id="KW-0809">Transit peptide</keyword>
<proteinExistence type="evidence at protein level"/>
<name>PAP13_ARATH</name>
<evidence type="ECO:0000255" key="1"/>
<evidence type="ECO:0000269" key="2">
    <source>
    </source>
</evidence>
<evidence type="ECO:0000269" key="3">
    <source>
    </source>
</evidence>
<evidence type="ECO:0000303" key="4">
    <source>
    </source>
</evidence>
<evidence type="ECO:0000303" key="5">
    <source>
    </source>
</evidence>
<evidence type="ECO:0000303" key="6">
    <source>
    </source>
</evidence>
<evidence type="ECO:0000303" key="7">
    <source ref="6"/>
</evidence>
<evidence type="ECO:0000305" key="8"/>
<evidence type="ECO:0007744" key="9">
    <source>
    </source>
</evidence>
<organism>
    <name type="scientific">Arabidopsis thaliana</name>
    <name type="common">Mouse-ear cress</name>
    <dbReference type="NCBI Taxonomy" id="3702"/>
    <lineage>
        <taxon>Eukaryota</taxon>
        <taxon>Viridiplantae</taxon>
        <taxon>Streptophyta</taxon>
        <taxon>Embryophyta</taxon>
        <taxon>Tracheophyta</taxon>
        <taxon>Spermatophyta</taxon>
        <taxon>Magnoliopsida</taxon>
        <taxon>eudicotyledons</taxon>
        <taxon>Gunneridae</taxon>
        <taxon>Pentapetalae</taxon>
        <taxon>rosids</taxon>
        <taxon>malvids</taxon>
        <taxon>Brassicales</taxon>
        <taxon>Brassicaceae</taxon>
        <taxon>Camelineae</taxon>
        <taxon>Arabidopsis</taxon>
    </lineage>
</organism>
<protein>
    <recommendedName>
        <fullName>Probable plastid-lipid-associated protein 13, chloroplastic</fullName>
    </recommendedName>
    <alternativeName>
        <fullName>Fibrillin-7b</fullName>
        <shortName>AtPGL30</shortName>
    </alternativeName>
</protein>
<sequence>MALIHGSVPGTSAVRLVFSTSASPSRFCLNVPVVKQGWKNSCRRRVLRAMVQETVQGSPLVYAREMERLSAKESLLLALKDAGGFEALVTGKTTNMQRIDVNERITSLERLNPTPRPTTSPCFEGRWNFEWFGSGSPGLLAARVIFERFPSTLANLSRMEILIKDANAKATANIKLLNSIESKIILSSKLTVEGPLRLKEEYVEGMLETPTVIEEAVPEQLKSALGQAATTLQQLPALIKDTLASGLRIPLSGSFERFFMISYLDEEILIVRDTEGVPEVLTRIETPSSTVVETIEYDS</sequence>
<gene>
    <name type="primary">PAP13</name>
    <name type="synonym">FBN7b</name>
    <name type="synonym">FIB7b</name>
    <name type="ordered locus">At2g42130</name>
    <name type="ORF">T24P15.4</name>
</gene>